<accession>A5IV17</accession>
<sequence>MARREEETKEFEERVVTINRVAKVVKGGRRFRFTALVVVGDKNGRVGFGTGKAQEVPEAIKKAVEAAKKDLVVVPRVEGTTPHTITGRYGSGSVFMKPAAPGTGVIAGGPVRAVLELAGITDILSKSLGSNTPINMVRATIDGLQNLKNAEDVAKLRGKTVEELYN</sequence>
<name>RS5_STAA9</name>
<evidence type="ECO:0000255" key="1">
    <source>
        <dbReference type="HAMAP-Rule" id="MF_01307"/>
    </source>
</evidence>
<evidence type="ECO:0000305" key="2"/>
<organism>
    <name type="scientific">Staphylococcus aureus (strain JH9)</name>
    <dbReference type="NCBI Taxonomy" id="359786"/>
    <lineage>
        <taxon>Bacteria</taxon>
        <taxon>Bacillati</taxon>
        <taxon>Bacillota</taxon>
        <taxon>Bacilli</taxon>
        <taxon>Bacillales</taxon>
        <taxon>Staphylococcaceae</taxon>
        <taxon>Staphylococcus</taxon>
    </lineage>
</organism>
<protein>
    <recommendedName>
        <fullName evidence="1">Small ribosomal subunit protein uS5</fullName>
    </recommendedName>
    <alternativeName>
        <fullName evidence="2">30S ribosomal protein S5</fullName>
    </alternativeName>
</protein>
<proteinExistence type="inferred from homology"/>
<keyword id="KW-0687">Ribonucleoprotein</keyword>
<keyword id="KW-0689">Ribosomal protein</keyword>
<keyword id="KW-0694">RNA-binding</keyword>
<keyword id="KW-0699">rRNA-binding</keyword>
<comment type="function">
    <text evidence="1">With S4 and S12 plays an important role in translational accuracy.</text>
</comment>
<comment type="function">
    <text evidence="1">Located at the back of the 30S subunit body where it stabilizes the conformation of the head with respect to the body.</text>
</comment>
<comment type="subunit">
    <text evidence="1">Part of the 30S ribosomal subunit. Contacts proteins S4 and S8.</text>
</comment>
<comment type="domain">
    <text>The N-terminal domain interacts with the head of the 30S subunit; the C-terminal domain interacts with the body and contacts protein S4. The interaction surface between S4 and S5 is involved in control of translational fidelity.</text>
</comment>
<comment type="similarity">
    <text evidence="1">Belongs to the universal ribosomal protein uS5 family.</text>
</comment>
<gene>
    <name evidence="1" type="primary">rpsE</name>
    <name type="ordered locus">SaurJH9_2260</name>
</gene>
<dbReference type="EMBL" id="CP000703">
    <property type="protein sequence ID" value="ABQ50040.1"/>
    <property type="molecule type" value="Genomic_DNA"/>
</dbReference>
<dbReference type="RefSeq" id="WP_000113851.1">
    <property type="nucleotide sequence ID" value="NC_009487.1"/>
</dbReference>
<dbReference type="SMR" id="A5IV17"/>
<dbReference type="KEGG" id="saj:SaurJH9_2260"/>
<dbReference type="HOGENOM" id="CLU_065898_2_2_9"/>
<dbReference type="GO" id="GO:0015935">
    <property type="term" value="C:small ribosomal subunit"/>
    <property type="evidence" value="ECO:0007669"/>
    <property type="project" value="InterPro"/>
</dbReference>
<dbReference type="GO" id="GO:0019843">
    <property type="term" value="F:rRNA binding"/>
    <property type="evidence" value="ECO:0007669"/>
    <property type="project" value="UniProtKB-UniRule"/>
</dbReference>
<dbReference type="GO" id="GO:0003735">
    <property type="term" value="F:structural constituent of ribosome"/>
    <property type="evidence" value="ECO:0007669"/>
    <property type="project" value="InterPro"/>
</dbReference>
<dbReference type="GO" id="GO:0006412">
    <property type="term" value="P:translation"/>
    <property type="evidence" value="ECO:0007669"/>
    <property type="project" value="UniProtKB-UniRule"/>
</dbReference>
<dbReference type="FunFam" id="3.30.160.20:FF:000001">
    <property type="entry name" value="30S ribosomal protein S5"/>
    <property type="match status" value="1"/>
</dbReference>
<dbReference type="FunFam" id="3.30.230.10:FF:000002">
    <property type="entry name" value="30S ribosomal protein S5"/>
    <property type="match status" value="1"/>
</dbReference>
<dbReference type="Gene3D" id="3.30.160.20">
    <property type="match status" value="1"/>
</dbReference>
<dbReference type="Gene3D" id="3.30.230.10">
    <property type="match status" value="1"/>
</dbReference>
<dbReference type="HAMAP" id="MF_01307_B">
    <property type="entry name" value="Ribosomal_uS5_B"/>
    <property type="match status" value="1"/>
</dbReference>
<dbReference type="InterPro" id="IPR020568">
    <property type="entry name" value="Ribosomal_Su5_D2-typ_SF"/>
</dbReference>
<dbReference type="InterPro" id="IPR000851">
    <property type="entry name" value="Ribosomal_uS5"/>
</dbReference>
<dbReference type="InterPro" id="IPR005712">
    <property type="entry name" value="Ribosomal_uS5_bac-type"/>
</dbReference>
<dbReference type="InterPro" id="IPR005324">
    <property type="entry name" value="Ribosomal_uS5_C"/>
</dbReference>
<dbReference type="InterPro" id="IPR013810">
    <property type="entry name" value="Ribosomal_uS5_N"/>
</dbReference>
<dbReference type="InterPro" id="IPR018192">
    <property type="entry name" value="Ribosomal_uS5_N_CS"/>
</dbReference>
<dbReference type="InterPro" id="IPR014721">
    <property type="entry name" value="Ribsml_uS5_D2-typ_fold_subgr"/>
</dbReference>
<dbReference type="NCBIfam" id="TIGR01021">
    <property type="entry name" value="rpsE_bact"/>
    <property type="match status" value="1"/>
</dbReference>
<dbReference type="PANTHER" id="PTHR48277">
    <property type="entry name" value="MITOCHONDRIAL RIBOSOMAL PROTEIN S5"/>
    <property type="match status" value="1"/>
</dbReference>
<dbReference type="PANTHER" id="PTHR48277:SF1">
    <property type="entry name" value="MITOCHONDRIAL RIBOSOMAL PROTEIN S5"/>
    <property type="match status" value="1"/>
</dbReference>
<dbReference type="Pfam" id="PF00333">
    <property type="entry name" value="Ribosomal_S5"/>
    <property type="match status" value="1"/>
</dbReference>
<dbReference type="Pfam" id="PF03719">
    <property type="entry name" value="Ribosomal_S5_C"/>
    <property type="match status" value="1"/>
</dbReference>
<dbReference type="SUPFAM" id="SSF54768">
    <property type="entry name" value="dsRNA-binding domain-like"/>
    <property type="match status" value="1"/>
</dbReference>
<dbReference type="SUPFAM" id="SSF54211">
    <property type="entry name" value="Ribosomal protein S5 domain 2-like"/>
    <property type="match status" value="1"/>
</dbReference>
<dbReference type="PROSITE" id="PS00585">
    <property type="entry name" value="RIBOSOMAL_S5"/>
    <property type="match status" value="1"/>
</dbReference>
<dbReference type="PROSITE" id="PS50881">
    <property type="entry name" value="S5_DSRBD"/>
    <property type="match status" value="1"/>
</dbReference>
<feature type="chain" id="PRO_1000086064" description="Small ribosomal subunit protein uS5">
    <location>
        <begin position="1"/>
        <end position="166"/>
    </location>
</feature>
<feature type="domain" description="S5 DRBM" evidence="1">
    <location>
        <begin position="11"/>
        <end position="74"/>
    </location>
</feature>
<reference key="1">
    <citation type="submission" date="2007-05" db="EMBL/GenBank/DDBJ databases">
        <title>Complete sequence of chromosome of Staphylococcus aureus subsp. aureus JH9.</title>
        <authorList>
            <consortium name="US DOE Joint Genome Institute"/>
            <person name="Copeland A."/>
            <person name="Lucas S."/>
            <person name="Lapidus A."/>
            <person name="Barry K."/>
            <person name="Detter J.C."/>
            <person name="Glavina del Rio T."/>
            <person name="Hammon N."/>
            <person name="Israni S."/>
            <person name="Pitluck S."/>
            <person name="Chain P."/>
            <person name="Malfatti S."/>
            <person name="Shin M."/>
            <person name="Vergez L."/>
            <person name="Schmutz J."/>
            <person name="Larimer F."/>
            <person name="Land M."/>
            <person name="Hauser L."/>
            <person name="Kyrpides N."/>
            <person name="Kim E."/>
            <person name="Tomasz A."/>
            <person name="Richardson P."/>
        </authorList>
    </citation>
    <scope>NUCLEOTIDE SEQUENCE [LARGE SCALE GENOMIC DNA]</scope>
    <source>
        <strain>JH9</strain>
    </source>
</reference>